<reference key="1">
    <citation type="journal article" date="1989" name="Nucleic Acids Res.">
        <title>The nucleotide sequence and reading frames of a mutant hepatitis B virus subtype adr.</title>
        <authorList>
            <person name="Rho H.M."/>
            <person name="Kim K."/>
            <person name="Hyun S.W."/>
            <person name="Kim Y.S."/>
        </authorList>
    </citation>
    <scope>NUCLEOTIDE SEQUENCE [GENOMIC DNA]</scope>
</reference>
<reference key="2">
    <citation type="journal article" date="2007" name="World J. Gastroenterol.">
        <title>Hepatitis B virus replication.</title>
        <authorList>
            <person name="Beck J."/>
            <person name="Nassal M."/>
        </authorList>
    </citation>
    <scope>REVIEW</scope>
</reference>
<organism>
    <name type="scientific">Hepatitis B virus genotype C subtype adr (isolate Korea/Kim/1989)</name>
    <name type="common">HBV-C</name>
    <dbReference type="NCBI Taxonomy" id="31512"/>
    <lineage>
        <taxon>Viruses</taxon>
        <taxon>Riboviria</taxon>
        <taxon>Pararnavirae</taxon>
        <taxon>Artverviricota</taxon>
        <taxon>Revtraviricetes</taxon>
        <taxon>Blubervirales</taxon>
        <taxon>Hepadnaviridae</taxon>
        <taxon>Orthohepadnavirus</taxon>
        <taxon>Hepatitis B virus</taxon>
    </lineage>
</organism>
<protein>
    <recommendedName>
        <fullName evidence="1">Protein P</fullName>
    </recommendedName>
    <domain>
        <recommendedName>
            <fullName evidence="1">DNA-directed DNA polymerase</fullName>
            <ecNumber evidence="1">2.7.7.7</ecNumber>
        </recommendedName>
    </domain>
    <domain>
        <recommendedName>
            <fullName evidence="1">RNA-directed DNA polymerase</fullName>
            <ecNumber evidence="1">2.7.7.49</ecNumber>
        </recommendedName>
    </domain>
    <domain>
        <recommendedName>
            <fullName evidence="1">Ribonuclease H</fullName>
            <ecNumber evidence="1">3.1.26.4</ecNumber>
        </recommendedName>
    </domain>
</protein>
<name>DPOL_HBVC4</name>
<evidence type="ECO:0000255" key="1">
    <source>
        <dbReference type="HAMAP-Rule" id="MF_04073"/>
    </source>
</evidence>
<evidence type="ECO:0000256" key="2">
    <source>
        <dbReference type="SAM" id="MobiDB-lite"/>
    </source>
</evidence>
<accession>P31870</accession>
<accession>Q67861</accession>
<accession>Q67866</accession>
<sequence>MPLSYQHFRKLLLLDDEAGPLEEELPRLADEDLNRRVAEDLNLGNLNVSIPWTHKVGNFTGLYSSTVPVFNPEWQTPSFPHIHLQEDIINRCQQYVGPLTVNEKRRLKLIMPARFYPKLTKYLPLDKGIKPYYPEHAVNHYFKTRHYLHTLWKAGILYKRETTRSASFCGSPYSWEQELQHGRLVFQTSTRHGDESFCSQSSGILSRSPVGPCVRSQLKQSRLGLQPQQGSLARGKSGRSGSIRARVPPTTRRSFGVEPSGSGHIDNRASSTSSCLHQSAVRKTAYSHLSTSKRQSSSGHAVELHHISPSPARSQSEGPIFSSWWLQFRNSKPCSDYCLTHIVNLLEDWGPCTEHGEHNIRIPRTPARVTGGVFLVDKNPHNTTESRLVVDFSQFSRGSTHVSWPKFAVPNLQSLTNLLSSNLSWLSLDVSAAFYHIPLHPAAMPHLLVGSSGLPRYVARLSSTSRNINHQHGTMQDLHDSCSRNLYVSLLLLYKTFGRKLHLYSHPIILGFRKIPMGGGLSPFLLAQFTSAICSVVRRAFPHCLAFSYMDDVVLGAKSVQHLESLFTSITNFLLSLGIHLNPNKTKRWGYSLNFMGYVIGSWGTLPQEHIVLKIKQCFRKLPVNRPIDWKVCQRIVGLLGFAAPFTQCGYPALMPLYACIQSKQAFTFSPTYKAFLCKQYLHLYPVARRTALCQVFADATPTGWGLAIGHRRMRGTFVAPLPIHTAELLAACFARSRSGAKLIGTDNSVVLSRKYTSFPWLLGCAANWILRGTYFVYVPSALNPADDPSRGRLGLIRPLLHLRFRPTTGRTSLYAVSPSVPSHLPDRVHFASPLHVAWRPP</sequence>
<proteinExistence type="inferred from homology"/>
<comment type="function">
    <text evidence="1">Multifunctional enzyme that converts the viral RNA genome into dsDNA in viral cytoplasmic capsids. This enzyme displays a DNA polymerase activity that can copy either DNA or RNA templates, and a ribonuclease H (RNase H) activity that cleaves the RNA strand of RNA-DNA heteroduplexes in a partially processive 3'- to 5'-endonucleasic mode. Neo-synthesized pregenomic RNA (pgRNA) are encapsidated together with the P protein, and reverse-transcribed inside the nucleocapsid. Initiation of reverse-transcription occurs first by binding the epsilon loop on the pgRNA genome, and is initiated by protein priming, thereby the 5'-end of (-)DNA is covalently linked to P protein. Partial (+)DNA is synthesized from the (-)DNA template and generates the relaxed circular DNA (RC-DNA) genome. After budding and infection, the RC-DNA migrates in the nucleus, and is converted into a plasmid-like covalently closed circular DNA (cccDNA). The activity of P protein does not seem to be necessary for cccDNA generation, and is presumably released from (+)DNA by host nuclear DNA repair machinery.</text>
</comment>
<comment type="catalytic activity">
    <reaction evidence="1">
        <text>DNA(n) + a 2'-deoxyribonucleoside 5'-triphosphate = DNA(n+1) + diphosphate</text>
        <dbReference type="Rhea" id="RHEA:22508"/>
        <dbReference type="Rhea" id="RHEA-COMP:17339"/>
        <dbReference type="Rhea" id="RHEA-COMP:17340"/>
        <dbReference type="ChEBI" id="CHEBI:33019"/>
        <dbReference type="ChEBI" id="CHEBI:61560"/>
        <dbReference type="ChEBI" id="CHEBI:173112"/>
        <dbReference type="EC" id="2.7.7.7"/>
    </reaction>
</comment>
<comment type="catalytic activity">
    <reaction evidence="1">
        <text>DNA(n) + a 2'-deoxyribonucleoside 5'-triphosphate = DNA(n+1) + diphosphate</text>
        <dbReference type="Rhea" id="RHEA:22508"/>
        <dbReference type="Rhea" id="RHEA-COMP:17339"/>
        <dbReference type="Rhea" id="RHEA-COMP:17340"/>
        <dbReference type="ChEBI" id="CHEBI:33019"/>
        <dbReference type="ChEBI" id="CHEBI:61560"/>
        <dbReference type="ChEBI" id="CHEBI:173112"/>
        <dbReference type="EC" id="2.7.7.49"/>
    </reaction>
</comment>
<comment type="catalytic activity">
    <reaction evidence="1">
        <text>Endonucleolytic cleavage to 5'-phosphomonoester.</text>
        <dbReference type="EC" id="3.1.26.4"/>
    </reaction>
</comment>
<comment type="activity regulation">
    <text evidence="1">Activated by host HSP70 and HSP40 in vitro to be able to bind the epsilon loop of the pgRNA. Because deletion of the RNase H region renders the protein partly chaperone-independent, the chaperones may be needed indirectly to relieve occlusion of the RNA-binding site by this domain. Inhibited by several reverse-transcriptase inhibitors: Lamivudine, Adefovir and Entecavir.</text>
</comment>
<comment type="domain">
    <text evidence="1">Terminal protein domain (TP) is hepadnavirus-specific. Spacer domain is highly variable and separates the TP and RT domains. Polymerase/reverse-transcriptase domain (RT) and ribonuclease H domain (RH) are similar to retrovirus reverse transcriptase/RNase H.</text>
</comment>
<comment type="domain">
    <text evidence="1">The polymerase/reverse transcriptase (RT) and ribonuclease H (RH) domains are structured in five subdomains: finger, palm, thumb, connection and RNase H. Within the palm subdomain, the 'primer grip' region is thought to be involved in the positioning of the primer terminus for accommodating the incoming nucleotide. The RH domain stabilizes the association of RT with primer-template.</text>
</comment>
<comment type="miscellaneous">
    <text evidence="1">Hepadnaviral virions contain probably just one P protein molecule per particle.</text>
</comment>
<comment type="similarity">
    <text evidence="1">Belongs to the hepadnaviridae P protein family.</text>
</comment>
<gene>
    <name evidence="1" type="primary">P</name>
</gene>
<feature type="chain" id="PRO_0000222336" description="Protein P">
    <location>
        <begin position="1"/>
        <end position="842"/>
    </location>
</feature>
<feature type="domain" description="Reverse transcriptase" evidence="1">
    <location>
        <begin position="357"/>
        <end position="600"/>
    </location>
</feature>
<feature type="region of interest" description="Terminal protein domain (TP)" evidence="1">
    <location>
        <begin position="1"/>
        <end position="177"/>
    </location>
</feature>
<feature type="region of interest" description="Spacer" evidence="1">
    <location>
        <begin position="178"/>
        <end position="346"/>
    </location>
</feature>
<feature type="region of interest" description="Disordered" evidence="2">
    <location>
        <begin position="218"/>
        <end position="274"/>
    </location>
</feature>
<feature type="region of interest" description="Polymerase/reverse transcriptase domain (RT)" evidence="1">
    <location>
        <begin position="347"/>
        <end position="690"/>
    </location>
</feature>
<feature type="binding site" evidence="1">
    <location>
        <position position="429"/>
    </location>
    <ligand>
        <name>Mg(2+)</name>
        <dbReference type="ChEBI" id="CHEBI:18420"/>
        <note>catalytic</note>
    </ligand>
</feature>
<feature type="binding site" evidence="1">
    <location>
        <position position="551"/>
    </location>
    <ligand>
        <name>Mg(2+)</name>
        <dbReference type="ChEBI" id="CHEBI:18420"/>
        <note>catalytic</note>
    </ligand>
</feature>
<feature type="binding site" evidence="1">
    <location>
        <position position="552"/>
    </location>
    <ligand>
        <name>Mg(2+)</name>
        <dbReference type="ChEBI" id="CHEBI:18420"/>
        <note>catalytic</note>
    </ligand>
</feature>
<feature type="site" description="Priming of reverse-transcription by covalently linking the first nucleotide of the (-)DNA" evidence="1">
    <location>
        <position position="63"/>
    </location>
</feature>
<organismHost>
    <name type="scientific">Homo sapiens</name>
    <name type="common">Human</name>
    <dbReference type="NCBI Taxonomy" id="9606"/>
</organismHost>
<organismHost>
    <name type="scientific">Pan troglodytes</name>
    <name type="common">Chimpanzee</name>
    <dbReference type="NCBI Taxonomy" id="9598"/>
</organismHost>
<keyword id="KW-0235">DNA replication</keyword>
<keyword id="KW-0238">DNA-binding</keyword>
<keyword id="KW-0239">DNA-directed DNA polymerase</keyword>
<keyword id="KW-0255">Endonuclease</keyword>
<keyword id="KW-0945">Host-virus interaction</keyword>
<keyword id="KW-0378">Hydrolase</keyword>
<keyword id="KW-1090">Inhibition of host innate immune response by virus</keyword>
<keyword id="KW-1113">Inhibition of host RLR pathway by virus</keyword>
<keyword id="KW-0460">Magnesium</keyword>
<keyword id="KW-0479">Metal-binding</keyword>
<keyword id="KW-0511">Multifunctional enzyme</keyword>
<keyword id="KW-0540">Nuclease</keyword>
<keyword id="KW-0548">Nucleotidyltransferase</keyword>
<keyword id="KW-0695">RNA-directed DNA polymerase</keyword>
<keyword id="KW-0808">Transferase</keyword>
<keyword id="KW-0899">Viral immunoevasion</keyword>
<dbReference type="EC" id="2.7.7.7" evidence="1"/>
<dbReference type="EC" id="2.7.7.49" evidence="1"/>
<dbReference type="EC" id="3.1.26.4" evidence="1"/>
<dbReference type="EMBL" id="X14193">
    <property type="protein sequence ID" value="CAA32399.1"/>
    <property type="molecule type" value="Genomic_DNA"/>
</dbReference>
<dbReference type="EMBL" id="X14193">
    <property type="protein sequence ID" value="CAA32405.1"/>
    <property type="status" value="ALT_TERM"/>
    <property type="molecule type" value="Genomic_DNA"/>
</dbReference>
<dbReference type="PIR" id="S04568">
    <property type="entry name" value="JDVLVS"/>
</dbReference>
<dbReference type="Proteomes" id="UP000007924">
    <property type="component" value="Genome"/>
</dbReference>
<dbReference type="GO" id="GO:0003677">
    <property type="term" value="F:DNA binding"/>
    <property type="evidence" value="ECO:0007669"/>
    <property type="project" value="UniProtKB-UniRule"/>
</dbReference>
<dbReference type="GO" id="GO:0003887">
    <property type="term" value="F:DNA-directed DNA polymerase activity"/>
    <property type="evidence" value="ECO:0007669"/>
    <property type="project" value="UniProtKB-UniRule"/>
</dbReference>
<dbReference type="GO" id="GO:0046872">
    <property type="term" value="F:metal ion binding"/>
    <property type="evidence" value="ECO:0007669"/>
    <property type="project" value="UniProtKB-UniRule"/>
</dbReference>
<dbReference type="GO" id="GO:0003964">
    <property type="term" value="F:RNA-directed DNA polymerase activity"/>
    <property type="evidence" value="ECO:0007669"/>
    <property type="project" value="UniProtKB-UniRule"/>
</dbReference>
<dbReference type="GO" id="GO:0004523">
    <property type="term" value="F:RNA-DNA hybrid ribonuclease activity"/>
    <property type="evidence" value="ECO:0007669"/>
    <property type="project" value="UniProtKB-UniRule"/>
</dbReference>
<dbReference type="GO" id="GO:0006260">
    <property type="term" value="P:DNA replication"/>
    <property type="evidence" value="ECO:0007669"/>
    <property type="project" value="UniProtKB-UniRule"/>
</dbReference>
<dbReference type="GO" id="GO:0052170">
    <property type="term" value="P:symbiont-mediated suppression of host innate immune response"/>
    <property type="evidence" value="ECO:0007669"/>
    <property type="project" value="UniProtKB-UniRule"/>
</dbReference>
<dbReference type="FunFam" id="3.30.70.270:FF:000009">
    <property type="entry name" value="Protein P"/>
    <property type="match status" value="1"/>
</dbReference>
<dbReference type="Gene3D" id="3.30.70.270">
    <property type="match status" value="1"/>
</dbReference>
<dbReference type="HAMAP" id="MF_04073">
    <property type="entry name" value="HBV_DPOL"/>
    <property type="match status" value="1"/>
</dbReference>
<dbReference type="InterPro" id="IPR043502">
    <property type="entry name" value="DNA/RNA_pol_sf"/>
</dbReference>
<dbReference type="InterPro" id="IPR001462">
    <property type="entry name" value="DNApol_viral_C"/>
</dbReference>
<dbReference type="InterPro" id="IPR000201">
    <property type="entry name" value="DNApol_viral_N"/>
</dbReference>
<dbReference type="InterPro" id="IPR037531">
    <property type="entry name" value="HBV_DPOL"/>
</dbReference>
<dbReference type="InterPro" id="IPR043128">
    <property type="entry name" value="Rev_trsase/Diguanyl_cyclase"/>
</dbReference>
<dbReference type="InterPro" id="IPR000477">
    <property type="entry name" value="RT_dom"/>
</dbReference>
<dbReference type="InterPro" id="IPR051320">
    <property type="entry name" value="Viral_Replic_Matur_Polypro"/>
</dbReference>
<dbReference type="PANTHER" id="PTHR33064:SF29">
    <property type="entry name" value="PEPTIDASE A2 DOMAIN-CONTAINING PROTEIN-RELATED"/>
    <property type="match status" value="1"/>
</dbReference>
<dbReference type="PANTHER" id="PTHR33064">
    <property type="entry name" value="POL PROTEIN"/>
    <property type="match status" value="1"/>
</dbReference>
<dbReference type="Pfam" id="PF00336">
    <property type="entry name" value="DNA_pol_viral_C"/>
    <property type="match status" value="1"/>
</dbReference>
<dbReference type="Pfam" id="PF00242">
    <property type="entry name" value="DNA_pol_viral_N"/>
    <property type="match status" value="1"/>
</dbReference>
<dbReference type="Pfam" id="PF00078">
    <property type="entry name" value="RVT_1"/>
    <property type="match status" value="1"/>
</dbReference>
<dbReference type="SUPFAM" id="SSF56672">
    <property type="entry name" value="DNA/RNA polymerases"/>
    <property type="match status" value="1"/>
</dbReference>
<dbReference type="PROSITE" id="PS50878">
    <property type="entry name" value="RT_POL"/>
    <property type="match status" value="1"/>
</dbReference>